<feature type="chain" id="PRO_0000114131" description="Chromosomal replication initiator protein DnaA">
    <location>
        <begin position="1"/>
        <end position="446"/>
    </location>
</feature>
<feature type="region of interest" description="Domain I, interacts with DnaA modulators" evidence="1">
    <location>
        <begin position="1"/>
        <end position="72"/>
    </location>
</feature>
<feature type="region of interest" description="Domain II" evidence="1">
    <location>
        <begin position="72"/>
        <end position="109"/>
    </location>
</feature>
<feature type="region of interest" description="Domain III, AAA+ region" evidence="1">
    <location>
        <begin position="110"/>
        <end position="326"/>
    </location>
</feature>
<feature type="region of interest" description="Domain IV, binds dsDNA" evidence="1">
    <location>
        <begin position="327"/>
        <end position="446"/>
    </location>
</feature>
<feature type="binding site" evidence="1">
    <location>
        <position position="154"/>
    </location>
    <ligand>
        <name>ATP</name>
        <dbReference type="ChEBI" id="CHEBI:30616"/>
    </ligand>
</feature>
<feature type="binding site" evidence="1">
    <location>
        <position position="156"/>
    </location>
    <ligand>
        <name>ATP</name>
        <dbReference type="ChEBI" id="CHEBI:30616"/>
    </ligand>
</feature>
<feature type="binding site" evidence="1">
    <location>
        <position position="157"/>
    </location>
    <ligand>
        <name>ATP</name>
        <dbReference type="ChEBI" id="CHEBI:30616"/>
    </ligand>
</feature>
<feature type="binding site" evidence="1">
    <location>
        <position position="158"/>
    </location>
    <ligand>
        <name>ATP</name>
        <dbReference type="ChEBI" id="CHEBI:30616"/>
    </ligand>
</feature>
<dbReference type="EMBL" id="AE017333">
    <property type="protein sequence ID" value="AAU38992.1"/>
    <property type="molecule type" value="Genomic_DNA"/>
</dbReference>
<dbReference type="EMBL" id="CP000002">
    <property type="protein sequence ID" value="AAU21645.1"/>
    <property type="molecule type" value="Genomic_DNA"/>
</dbReference>
<dbReference type="RefSeq" id="WP_009330034.1">
    <property type="nucleotide sequence ID" value="NC_006322.1"/>
</dbReference>
<dbReference type="SMR" id="Q65PM2"/>
<dbReference type="STRING" id="279010.BL00076"/>
<dbReference type="GeneID" id="92859050"/>
<dbReference type="KEGG" id="bld:BLi00001"/>
<dbReference type="KEGG" id="bli:BL00076"/>
<dbReference type="eggNOG" id="COG0593">
    <property type="taxonomic scope" value="Bacteria"/>
</dbReference>
<dbReference type="HOGENOM" id="CLU_026910_3_1_9"/>
<dbReference type="Proteomes" id="UP000000606">
    <property type="component" value="Chromosome"/>
</dbReference>
<dbReference type="GO" id="GO:0005737">
    <property type="term" value="C:cytoplasm"/>
    <property type="evidence" value="ECO:0007669"/>
    <property type="project" value="UniProtKB-SubCell"/>
</dbReference>
<dbReference type="GO" id="GO:0005886">
    <property type="term" value="C:plasma membrane"/>
    <property type="evidence" value="ECO:0007669"/>
    <property type="project" value="TreeGrafter"/>
</dbReference>
<dbReference type="GO" id="GO:0005524">
    <property type="term" value="F:ATP binding"/>
    <property type="evidence" value="ECO:0007669"/>
    <property type="project" value="UniProtKB-UniRule"/>
</dbReference>
<dbReference type="GO" id="GO:0016887">
    <property type="term" value="F:ATP hydrolysis activity"/>
    <property type="evidence" value="ECO:0007669"/>
    <property type="project" value="InterPro"/>
</dbReference>
<dbReference type="GO" id="GO:0003688">
    <property type="term" value="F:DNA replication origin binding"/>
    <property type="evidence" value="ECO:0007669"/>
    <property type="project" value="UniProtKB-UniRule"/>
</dbReference>
<dbReference type="GO" id="GO:0008289">
    <property type="term" value="F:lipid binding"/>
    <property type="evidence" value="ECO:0007669"/>
    <property type="project" value="UniProtKB-KW"/>
</dbReference>
<dbReference type="GO" id="GO:0006270">
    <property type="term" value="P:DNA replication initiation"/>
    <property type="evidence" value="ECO:0007669"/>
    <property type="project" value="UniProtKB-UniRule"/>
</dbReference>
<dbReference type="GO" id="GO:0006275">
    <property type="term" value="P:regulation of DNA replication"/>
    <property type="evidence" value="ECO:0007669"/>
    <property type="project" value="UniProtKB-UniRule"/>
</dbReference>
<dbReference type="CDD" id="cd00009">
    <property type="entry name" value="AAA"/>
    <property type="match status" value="1"/>
</dbReference>
<dbReference type="CDD" id="cd06571">
    <property type="entry name" value="Bac_DnaA_C"/>
    <property type="match status" value="1"/>
</dbReference>
<dbReference type="FunFam" id="1.10.1750.10:FF:000003">
    <property type="entry name" value="Chromosomal replication initiator protein DnaA"/>
    <property type="match status" value="1"/>
</dbReference>
<dbReference type="FunFam" id="1.10.8.60:FF:000003">
    <property type="entry name" value="Chromosomal replication initiator protein DnaA"/>
    <property type="match status" value="1"/>
</dbReference>
<dbReference type="FunFam" id="3.30.300.180:FF:000002">
    <property type="entry name" value="Chromosomal replication initiator protein DnaA"/>
    <property type="match status" value="1"/>
</dbReference>
<dbReference type="FunFam" id="3.40.50.300:FF:000150">
    <property type="entry name" value="Chromosomal replication initiator protein DnaA"/>
    <property type="match status" value="1"/>
</dbReference>
<dbReference type="Gene3D" id="1.10.1750.10">
    <property type="match status" value="1"/>
</dbReference>
<dbReference type="Gene3D" id="1.10.8.60">
    <property type="match status" value="1"/>
</dbReference>
<dbReference type="Gene3D" id="3.30.300.180">
    <property type="match status" value="1"/>
</dbReference>
<dbReference type="Gene3D" id="3.40.50.300">
    <property type="entry name" value="P-loop containing nucleotide triphosphate hydrolases"/>
    <property type="match status" value="1"/>
</dbReference>
<dbReference type="HAMAP" id="MF_00377">
    <property type="entry name" value="DnaA_bact"/>
    <property type="match status" value="1"/>
</dbReference>
<dbReference type="InterPro" id="IPR003593">
    <property type="entry name" value="AAA+_ATPase"/>
</dbReference>
<dbReference type="InterPro" id="IPR001957">
    <property type="entry name" value="Chromosome_initiator_DnaA"/>
</dbReference>
<dbReference type="InterPro" id="IPR020591">
    <property type="entry name" value="Chromosome_initiator_DnaA-like"/>
</dbReference>
<dbReference type="InterPro" id="IPR018312">
    <property type="entry name" value="Chromosome_initiator_DnaA_CS"/>
</dbReference>
<dbReference type="InterPro" id="IPR013159">
    <property type="entry name" value="DnaA_C"/>
</dbReference>
<dbReference type="InterPro" id="IPR013317">
    <property type="entry name" value="DnaA_dom"/>
</dbReference>
<dbReference type="InterPro" id="IPR024633">
    <property type="entry name" value="DnaA_N_dom"/>
</dbReference>
<dbReference type="InterPro" id="IPR038454">
    <property type="entry name" value="DnaA_N_sf"/>
</dbReference>
<dbReference type="InterPro" id="IPR027417">
    <property type="entry name" value="P-loop_NTPase"/>
</dbReference>
<dbReference type="InterPro" id="IPR010921">
    <property type="entry name" value="Trp_repressor/repl_initiator"/>
</dbReference>
<dbReference type="NCBIfam" id="TIGR00362">
    <property type="entry name" value="DnaA"/>
    <property type="match status" value="1"/>
</dbReference>
<dbReference type="NCBIfam" id="NF010686">
    <property type="entry name" value="PRK14086.1"/>
    <property type="match status" value="1"/>
</dbReference>
<dbReference type="PANTHER" id="PTHR30050">
    <property type="entry name" value="CHROMOSOMAL REPLICATION INITIATOR PROTEIN DNAA"/>
    <property type="match status" value="1"/>
</dbReference>
<dbReference type="PANTHER" id="PTHR30050:SF2">
    <property type="entry name" value="CHROMOSOMAL REPLICATION INITIATOR PROTEIN DNAA"/>
    <property type="match status" value="1"/>
</dbReference>
<dbReference type="Pfam" id="PF00308">
    <property type="entry name" value="Bac_DnaA"/>
    <property type="match status" value="1"/>
</dbReference>
<dbReference type="Pfam" id="PF08299">
    <property type="entry name" value="Bac_DnaA_C"/>
    <property type="match status" value="1"/>
</dbReference>
<dbReference type="Pfam" id="PF11638">
    <property type="entry name" value="DnaA_N"/>
    <property type="match status" value="1"/>
</dbReference>
<dbReference type="PRINTS" id="PR00051">
    <property type="entry name" value="DNAA"/>
</dbReference>
<dbReference type="SMART" id="SM00382">
    <property type="entry name" value="AAA"/>
    <property type="match status" value="1"/>
</dbReference>
<dbReference type="SMART" id="SM00760">
    <property type="entry name" value="Bac_DnaA_C"/>
    <property type="match status" value="1"/>
</dbReference>
<dbReference type="SUPFAM" id="SSF52540">
    <property type="entry name" value="P-loop containing nucleoside triphosphate hydrolases"/>
    <property type="match status" value="1"/>
</dbReference>
<dbReference type="SUPFAM" id="SSF48295">
    <property type="entry name" value="TrpR-like"/>
    <property type="match status" value="1"/>
</dbReference>
<dbReference type="PROSITE" id="PS01008">
    <property type="entry name" value="DNAA"/>
    <property type="match status" value="1"/>
</dbReference>
<accession>Q65PM2</accession>
<accession>Q630B3</accession>
<keyword id="KW-0067">ATP-binding</keyword>
<keyword id="KW-0963">Cytoplasm</keyword>
<keyword id="KW-0235">DNA replication</keyword>
<keyword id="KW-0238">DNA-binding</keyword>
<keyword id="KW-0446">Lipid-binding</keyword>
<keyword id="KW-0547">Nucleotide-binding</keyword>
<keyword id="KW-1185">Reference proteome</keyword>
<organism>
    <name type="scientific">Bacillus licheniformis (strain ATCC 14580 / DSM 13 / JCM 2505 / CCUG 7422 / NBRC 12200 / NCIMB 9375 / NCTC 10341 / NRRL NRS-1264 / Gibson 46)</name>
    <dbReference type="NCBI Taxonomy" id="279010"/>
    <lineage>
        <taxon>Bacteria</taxon>
        <taxon>Bacillati</taxon>
        <taxon>Bacillota</taxon>
        <taxon>Bacilli</taxon>
        <taxon>Bacillales</taxon>
        <taxon>Bacillaceae</taxon>
        <taxon>Bacillus</taxon>
    </lineage>
</organism>
<evidence type="ECO:0000255" key="1">
    <source>
        <dbReference type="HAMAP-Rule" id="MF_00377"/>
    </source>
</evidence>
<reference key="1">
    <citation type="journal article" date="2004" name="J. Mol. Microbiol. Biotechnol.">
        <title>The complete genome sequence of Bacillus licheniformis DSM13, an organism with great industrial potential.</title>
        <authorList>
            <person name="Veith B."/>
            <person name="Herzberg C."/>
            <person name="Steckel S."/>
            <person name="Feesche J."/>
            <person name="Maurer K.H."/>
            <person name="Ehrenreich P."/>
            <person name="Baeumer S."/>
            <person name="Henne A."/>
            <person name="Liesegang H."/>
            <person name="Merkl R."/>
            <person name="Ehrenreich A."/>
            <person name="Gottschalk G."/>
        </authorList>
    </citation>
    <scope>NUCLEOTIDE SEQUENCE [LARGE SCALE GENOMIC DNA]</scope>
    <source>
        <strain>ATCC 14580 / DSM 13 / JCM 2505 / CCUG 7422 / NBRC 12200 / NCIMB 9375 / NCTC 10341 / NRRL NRS-1264 / Gibson 46</strain>
    </source>
</reference>
<reference key="2">
    <citation type="journal article" date="2004" name="Genome Biol.">
        <title>Complete genome sequence of the industrial bacterium Bacillus licheniformis and comparisons with closely related Bacillus species.</title>
        <authorList>
            <person name="Rey M.W."/>
            <person name="Ramaiya P."/>
            <person name="Nelson B.A."/>
            <person name="Brody-Karpin S.D."/>
            <person name="Zaretsky E.J."/>
            <person name="Tang M."/>
            <person name="Lopez de Leon A."/>
            <person name="Xiang H."/>
            <person name="Gusti V."/>
            <person name="Clausen I.G."/>
            <person name="Olsen P.B."/>
            <person name="Rasmussen M.D."/>
            <person name="Andersen J.T."/>
            <person name="Joergensen P.L."/>
            <person name="Larsen T.S."/>
            <person name="Sorokin A."/>
            <person name="Bolotin A."/>
            <person name="Lapidus A."/>
            <person name="Galleron N."/>
            <person name="Ehrlich S.D."/>
            <person name="Berka R.M."/>
        </authorList>
    </citation>
    <scope>NUCLEOTIDE SEQUENCE [LARGE SCALE GENOMIC DNA]</scope>
    <source>
        <strain>ATCC 14580 / DSM 13 / JCM 2505 / CCUG 7422 / NBRC 12200 / NCIMB 9375 / NCTC 10341 / NRRL NRS-1264 / Gibson 46</strain>
    </source>
</reference>
<protein>
    <recommendedName>
        <fullName evidence="1">Chromosomal replication initiator protein DnaA</fullName>
    </recommendedName>
</protein>
<gene>
    <name evidence="1" type="primary">dnaA</name>
    <name type="ordered locus">BLi00001</name>
    <name type="ordered locus">BL00076</name>
</gene>
<sequence length="446" mass="50923">MKNISDLWNQALGQIEKKLSKPSFETWMKSTKAHSLQGDTLIITAPNEFARDWLESRYLHLIADTIYDLTGEELSIKFVIPQNQNEEDFMPKSPIKKMSKEEPADFPQNMLNPKYTFDTFVIGSGNRFAHAASLAVAEAPAKAYNPLFIYGGVGLGKTHLMHAIGHYVIDHNPSAKVVYLSSEKFTNEFINSIRDNKAVDFRNRYRNVDVLLIDDIQFLAGKEQTQEEFFHTFNTLHEETKQIVISSDRPPKEIPTLEDRLRSRFEWGLITDITPPDLETRIAILRKKAKAEGLDIPNEVMLYIANQIDSNIRELEGALIRVVAYSSLINKDINADLAAEALKDIIPSSKPKVITIKDIQRIVGQQFNIKLEDFKAKKRTKSVAFPRQIAMYLSREMTDSSLPKIGEEFGGRDHTTVIHAHEKISKLLSDDEQLQQQIKEIKEQLR</sequence>
<name>DNAA_BACLD</name>
<proteinExistence type="inferred from homology"/>
<comment type="function">
    <text evidence="1">Plays an essential role in the initiation and regulation of chromosomal replication. ATP-DnaA binds to the origin of replication (oriC) to initiate formation of the DNA replication initiation complex once per cell cycle. Binds the DnaA box (a 9 base pair repeat at the origin) and separates the double-stranded (ds)DNA. Forms a right-handed helical filament on oriC DNA; dsDNA binds to the exterior of the filament while single-stranded (ss)DNA is stabiized in the filament's interior. The ATP-DnaA-oriC complex binds and stabilizes one strand of the AT-rich DNA unwinding element (DUE), permitting loading of DNA polymerase. After initiation quickly degrades to an ADP-DnaA complex that is not apt for DNA replication. Binds acidic phospholipids.</text>
</comment>
<comment type="subunit">
    <text evidence="1">Oligomerizes as a right-handed, spiral filament on DNA at oriC.</text>
</comment>
<comment type="subcellular location">
    <subcellularLocation>
        <location evidence="1">Cytoplasm</location>
    </subcellularLocation>
</comment>
<comment type="domain">
    <text evidence="1">Domain I is involved in oligomerization and binding regulators, domain II is flexibile and of varying length in different bacteria, domain III forms the AAA+ region, while domain IV binds dsDNA.</text>
</comment>
<comment type="similarity">
    <text evidence="1">Belongs to the DnaA family.</text>
</comment>